<proteinExistence type="inferred from homology"/>
<reference key="1">
    <citation type="journal article" date="2009" name="Appl. Environ. Microbiol.">
        <title>Genome analysis of the meat starter culture bacterium Staphylococcus carnosus TM300.</title>
        <authorList>
            <person name="Rosenstein R."/>
            <person name="Nerz C."/>
            <person name="Biswas L."/>
            <person name="Resch A."/>
            <person name="Raddatz G."/>
            <person name="Schuster S.C."/>
            <person name="Goetz F."/>
        </authorList>
    </citation>
    <scope>NUCLEOTIDE SEQUENCE [LARGE SCALE GENOMIC DNA]</scope>
    <source>
        <strain>TM300</strain>
    </source>
</reference>
<dbReference type="EMBL" id="AM295250">
    <property type="protein sequence ID" value="CAL28618.1"/>
    <property type="molecule type" value="Genomic_DNA"/>
</dbReference>
<dbReference type="RefSeq" id="WP_002479550.1">
    <property type="nucleotide sequence ID" value="NC_012121.1"/>
</dbReference>
<dbReference type="SMR" id="B9DM54"/>
<dbReference type="GeneID" id="93794171"/>
<dbReference type="KEGG" id="sca:SCA_1712"/>
<dbReference type="eggNOG" id="COG0257">
    <property type="taxonomic scope" value="Bacteria"/>
</dbReference>
<dbReference type="HOGENOM" id="CLU_135723_6_2_9"/>
<dbReference type="OrthoDB" id="9802520at2"/>
<dbReference type="BioCyc" id="SCAR396513:SCA_RS08725-MONOMER"/>
<dbReference type="Proteomes" id="UP000000444">
    <property type="component" value="Chromosome"/>
</dbReference>
<dbReference type="GO" id="GO:0005737">
    <property type="term" value="C:cytoplasm"/>
    <property type="evidence" value="ECO:0007669"/>
    <property type="project" value="UniProtKB-ARBA"/>
</dbReference>
<dbReference type="GO" id="GO:1990904">
    <property type="term" value="C:ribonucleoprotein complex"/>
    <property type="evidence" value="ECO:0007669"/>
    <property type="project" value="UniProtKB-KW"/>
</dbReference>
<dbReference type="GO" id="GO:0005840">
    <property type="term" value="C:ribosome"/>
    <property type="evidence" value="ECO:0007669"/>
    <property type="project" value="UniProtKB-KW"/>
</dbReference>
<dbReference type="GO" id="GO:0003735">
    <property type="term" value="F:structural constituent of ribosome"/>
    <property type="evidence" value="ECO:0007669"/>
    <property type="project" value="InterPro"/>
</dbReference>
<dbReference type="GO" id="GO:0006412">
    <property type="term" value="P:translation"/>
    <property type="evidence" value="ECO:0007669"/>
    <property type="project" value="UniProtKB-UniRule"/>
</dbReference>
<dbReference type="HAMAP" id="MF_00251">
    <property type="entry name" value="Ribosomal_bL36"/>
    <property type="match status" value="1"/>
</dbReference>
<dbReference type="InterPro" id="IPR000473">
    <property type="entry name" value="Ribosomal_bL36"/>
</dbReference>
<dbReference type="InterPro" id="IPR035977">
    <property type="entry name" value="Ribosomal_bL36_sp"/>
</dbReference>
<dbReference type="NCBIfam" id="TIGR01022">
    <property type="entry name" value="rpmJ_bact"/>
    <property type="match status" value="1"/>
</dbReference>
<dbReference type="PANTHER" id="PTHR42888">
    <property type="entry name" value="50S RIBOSOMAL PROTEIN L36, CHLOROPLASTIC"/>
    <property type="match status" value="1"/>
</dbReference>
<dbReference type="PANTHER" id="PTHR42888:SF1">
    <property type="entry name" value="LARGE RIBOSOMAL SUBUNIT PROTEIN BL36C"/>
    <property type="match status" value="1"/>
</dbReference>
<dbReference type="Pfam" id="PF00444">
    <property type="entry name" value="Ribosomal_L36"/>
    <property type="match status" value="1"/>
</dbReference>
<dbReference type="SUPFAM" id="SSF57840">
    <property type="entry name" value="Ribosomal protein L36"/>
    <property type="match status" value="1"/>
</dbReference>
<dbReference type="PROSITE" id="PS00828">
    <property type="entry name" value="RIBOSOMAL_L36"/>
    <property type="match status" value="1"/>
</dbReference>
<protein>
    <recommendedName>
        <fullName evidence="1">Large ribosomal subunit protein bL36</fullName>
    </recommendedName>
    <alternativeName>
        <fullName evidence="2">50S ribosomal protein L36</fullName>
    </alternativeName>
</protein>
<organism>
    <name type="scientific">Staphylococcus carnosus (strain TM300)</name>
    <dbReference type="NCBI Taxonomy" id="396513"/>
    <lineage>
        <taxon>Bacteria</taxon>
        <taxon>Bacillati</taxon>
        <taxon>Bacillota</taxon>
        <taxon>Bacilli</taxon>
        <taxon>Bacillales</taxon>
        <taxon>Staphylococcaceae</taxon>
        <taxon>Staphylococcus</taxon>
    </lineage>
</organism>
<evidence type="ECO:0000255" key="1">
    <source>
        <dbReference type="HAMAP-Rule" id="MF_00251"/>
    </source>
</evidence>
<evidence type="ECO:0000305" key="2"/>
<sequence length="37" mass="4319">MKVRPSVKPICEKCKVIKRKGKVMIICENPKHKQRQG</sequence>
<accession>B9DM54</accession>
<gene>
    <name evidence="1" type="primary">rpmJ</name>
    <name type="ordered locus">Sca_1712</name>
</gene>
<name>RL36_STACT</name>
<keyword id="KW-1185">Reference proteome</keyword>
<keyword id="KW-0687">Ribonucleoprotein</keyword>
<keyword id="KW-0689">Ribosomal protein</keyword>
<comment type="similarity">
    <text evidence="1">Belongs to the bacterial ribosomal protein bL36 family.</text>
</comment>
<feature type="chain" id="PRO_1000196209" description="Large ribosomal subunit protein bL36">
    <location>
        <begin position="1"/>
        <end position="37"/>
    </location>
</feature>